<feature type="chain" id="PRO_0000089846" description="Integrator complex subunit 13">
    <location>
        <begin position="1"/>
        <end position="732"/>
    </location>
</feature>
<feature type="region of interest" description="Disordered" evidence="2">
    <location>
        <begin position="564"/>
        <end position="650"/>
    </location>
</feature>
<feature type="region of interest" description="Cleavage module binding motif (CMBM)" evidence="1">
    <location>
        <begin position="649"/>
        <end position="694"/>
    </location>
</feature>
<feature type="short sequence motif" description="Nuclear localization signal (NLS)" evidence="4">
    <location>
        <begin position="572"/>
        <end position="582"/>
    </location>
</feature>
<feature type="compositionally biased region" description="Basic and acidic residues" evidence="2">
    <location>
        <begin position="564"/>
        <end position="648"/>
    </location>
</feature>
<feature type="modified residue" description="Phosphoserine" evidence="1">
    <location>
        <position position="623"/>
    </location>
</feature>
<feature type="modified residue" description="Phosphoserine" evidence="1">
    <location>
        <position position="626"/>
    </location>
</feature>
<feature type="modified residue" description="Phosphoserine" evidence="1">
    <location>
        <position position="678"/>
    </location>
</feature>
<feature type="cross-link" description="Glycyl lysine isopeptide (Lys-Gly) (interchain with G-Cter in SUMO2)" evidence="1">
    <location>
        <position position="611"/>
    </location>
</feature>
<feature type="mutagenesis site" description="Loss of nuclear location. Location is mainly cytoplasmic or diffuse." evidence="4">
    <original>REDRED</original>
    <variation>AAAAAA</variation>
    <location>
        <begin position="577"/>
        <end position="582"/>
    </location>
</feature>
<feature type="sequence conflict" description="In Ref. 2; AAH26851/AAH27229." evidence="5" ref="2">
    <original>S</original>
    <variation>G</variation>
    <location>
        <position position="303"/>
    </location>
</feature>
<feature type="sequence conflict" description="In Ref. 2; AAH05696." evidence="5" ref="2">
    <original>G</original>
    <variation>R</variation>
    <location>
        <position position="605"/>
    </location>
</feature>
<reference key="1">
    <citation type="journal article" date="2009" name="PLoS Biol.">
        <title>Lineage-specific biology revealed by a finished genome assembly of the mouse.</title>
        <authorList>
            <person name="Church D.M."/>
            <person name="Goodstadt L."/>
            <person name="Hillier L.W."/>
            <person name="Zody M.C."/>
            <person name="Goldstein S."/>
            <person name="She X."/>
            <person name="Bult C.J."/>
            <person name="Agarwala R."/>
            <person name="Cherry J.L."/>
            <person name="DiCuccio M."/>
            <person name="Hlavina W."/>
            <person name="Kapustin Y."/>
            <person name="Meric P."/>
            <person name="Maglott D."/>
            <person name="Birtle Z."/>
            <person name="Marques A.C."/>
            <person name="Graves T."/>
            <person name="Zhou S."/>
            <person name="Teague B."/>
            <person name="Potamousis K."/>
            <person name="Churas C."/>
            <person name="Place M."/>
            <person name="Herschleb J."/>
            <person name="Runnheim R."/>
            <person name="Forrest D."/>
            <person name="Amos-Landgraf J."/>
            <person name="Schwartz D.C."/>
            <person name="Cheng Z."/>
            <person name="Lindblad-Toh K."/>
            <person name="Eichler E.E."/>
            <person name="Ponting C.P."/>
        </authorList>
    </citation>
    <scope>NUCLEOTIDE SEQUENCE [LARGE SCALE GENOMIC DNA]</scope>
    <source>
        <strain>C57BL/6J</strain>
    </source>
</reference>
<reference key="2">
    <citation type="journal article" date="2004" name="Genome Res.">
        <title>The status, quality, and expansion of the NIH full-length cDNA project: the Mammalian Gene Collection (MGC).</title>
        <authorList>
            <consortium name="The MGC Project Team"/>
        </authorList>
    </citation>
    <scope>NUCLEOTIDE SEQUENCE [LARGE SCALE MRNA]</scope>
    <source>
        <strain>FVB/N</strain>
        <tissue>Mammary tumor</tissue>
    </source>
</reference>
<reference key="3">
    <citation type="journal article" date="2010" name="Cell">
        <title>A tissue-specific atlas of mouse protein phosphorylation and expression.</title>
        <authorList>
            <person name="Huttlin E.L."/>
            <person name="Jedrychowski M.P."/>
            <person name="Elias J.E."/>
            <person name="Goswami T."/>
            <person name="Rad R."/>
            <person name="Beausoleil S.A."/>
            <person name="Villen J."/>
            <person name="Haas W."/>
            <person name="Sowa M.E."/>
            <person name="Gygi S.P."/>
        </authorList>
    </citation>
    <scope>IDENTIFICATION BY MASS SPECTROMETRY [LARGE SCALE ANALYSIS]</scope>
    <source>
        <tissue>Spleen</tissue>
    </source>
</reference>
<reference key="4">
    <citation type="journal article" date="2012" name="Mol. Biol. Cell">
        <title>Human Asunder promotes dynein recruitment and centrosomal tethering to the nucleus at mitotic entry.</title>
        <authorList>
            <person name="Jodoin J.N."/>
            <person name="Shboul M."/>
            <person name="Sitaram P."/>
            <person name="Zein-Sabatto H."/>
            <person name="Reversade B."/>
            <person name="Lee E."/>
            <person name="Lee L.A."/>
        </authorList>
    </citation>
    <scope>INTERACTION WITH PAFAH1B1</scope>
    <scope>SUBCELLULAR LOCATION</scope>
</reference>
<reference key="5">
    <citation type="journal article" date="2013" name="Mol. Biol. Cell">
        <title>Nuclear-localized Asunder regulates cytoplasmic dynein localization via its role in the integrator complex.</title>
        <authorList>
            <person name="Jodoin J.N."/>
            <person name="Sitaram P."/>
            <person name="Albrecht T.R."/>
            <person name="May S.B."/>
            <person name="Shboul M."/>
            <person name="Lee E."/>
            <person name="Reversade B."/>
            <person name="Wagner E.J."/>
            <person name="Lee L.A."/>
        </authorList>
    </citation>
    <scope>SUBCELLULAR LOCATION</scope>
    <scope>DOMAIN</scope>
    <scope>MUTAGENESIS OF 577-ARG--ASP-582</scope>
</reference>
<protein>
    <recommendedName>
        <fullName evidence="6">Integrator complex subunit 13</fullName>
    </recommendedName>
    <alternativeName>
        <fullName>Cell cycle regulator Mat89Bb homolog</fullName>
    </alternativeName>
    <alternativeName>
        <fullName>Protein asunder homolog</fullName>
    </alternativeName>
    <alternativeName>
        <fullName>Spermatogenesis-associated protein 30</fullName>
    </alternativeName>
</protein>
<dbReference type="EMBL" id="AC124128">
    <property type="status" value="NOT_ANNOTATED_CDS"/>
    <property type="molecule type" value="Genomic_DNA"/>
</dbReference>
<dbReference type="EMBL" id="BC005696">
    <property type="protein sequence ID" value="AAH05696.1"/>
    <property type="molecule type" value="mRNA"/>
</dbReference>
<dbReference type="EMBL" id="BC026851">
    <property type="protein sequence ID" value="AAH26851.1"/>
    <property type="molecule type" value="mRNA"/>
</dbReference>
<dbReference type="EMBL" id="BC027229">
    <property type="protein sequence ID" value="AAH27229.1"/>
    <property type="molecule type" value="mRNA"/>
</dbReference>
<dbReference type="CCDS" id="CCDS39710.1"/>
<dbReference type="RefSeq" id="NP_620096.2">
    <property type="nucleotide sequence ID" value="NM_138757.2"/>
</dbReference>
<dbReference type="SMR" id="Q8QZV7"/>
<dbReference type="BioGRID" id="214533">
    <property type="interactions" value="5"/>
</dbReference>
<dbReference type="FunCoup" id="Q8QZV7">
    <property type="interactions" value="5281"/>
</dbReference>
<dbReference type="IntAct" id="Q8QZV7">
    <property type="interactions" value="1"/>
</dbReference>
<dbReference type="MINT" id="Q8QZV7"/>
<dbReference type="STRING" id="10090.ENSMUSP00000032427"/>
<dbReference type="iPTMnet" id="Q8QZV7"/>
<dbReference type="PhosphoSitePlus" id="Q8QZV7"/>
<dbReference type="jPOST" id="Q8QZV7"/>
<dbReference type="PaxDb" id="10090-ENSMUSP00000032427"/>
<dbReference type="PeptideAtlas" id="Q8QZV7"/>
<dbReference type="ProteomicsDB" id="268975"/>
<dbReference type="Pumba" id="Q8QZV7"/>
<dbReference type="Antibodypedia" id="42367">
    <property type="antibodies" value="67 antibodies from 20 providers"/>
</dbReference>
<dbReference type="DNASU" id="71177"/>
<dbReference type="Ensembl" id="ENSMUST00000032427.15">
    <property type="protein sequence ID" value="ENSMUSP00000032427.9"/>
    <property type="gene ID" value="ENSMUSG00000040250.15"/>
</dbReference>
<dbReference type="GeneID" id="71177"/>
<dbReference type="KEGG" id="mmu:71177"/>
<dbReference type="UCSC" id="uc009esb.1">
    <property type="organism name" value="mouse"/>
</dbReference>
<dbReference type="AGR" id="MGI:1918427"/>
<dbReference type="CTD" id="55726"/>
<dbReference type="MGI" id="MGI:1918427">
    <property type="gene designation" value="Ints13"/>
</dbReference>
<dbReference type="VEuPathDB" id="HostDB:ENSMUSG00000040250"/>
<dbReference type="eggNOG" id="KOG3711">
    <property type="taxonomic scope" value="Eukaryota"/>
</dbReference>
<dbReference type="GeneTree" id="ENSGT00390000002793"/>
<dbReference type="InParanoid" id="Q8QZV7"/>
<dbReference type="OMA" id="NCTAMHR"/>
<dbReference type="OrthoDB" id="5844105at2759"/>
<dbReference type="PhylomeDB" id="Q8QZV7"/>
<dbReference type="TreeFam" id="TF105815"/>
<dbReference type="Reactome" id="R-MMU-6807505">
    <property type="pathway name" value="RNA polymerase II transcribes snRNA genes"/>
</dbReference>
<dbReference type="BioGRID-ORCS" id="71177">
    <property type="hits" value="24 hits in 82 CRISPR screens"/>
</dbReference>
<dbReference type="ChiTaRS" id="Ints13">
    <property type="organism name" value="mouse"/>
</dbReference>
<dbReference type="PRO" id="PR:Q8QZV7"/>
<dbReference type="Proteomes" id="UP000000589">
    <property type="component" value="Chromosome 6"/>
</dbReference>
<dbReference type="RNAct" id="Q8QZV7">
    <property type="molecule type" value="protein"/>
</dbReference>
<dbReference type="Bgee" id="ENSMUSG00000040250">
    <property type="expression patterns" value="Expressed in otic placode and 257 other cell types or tissues"/>
</dbReference>
<dbReference type="ExpressionAtlas" id="Q8QZV7">
    <property type="expression patterns" value="baseline and differential"/>
</dbReference>
<dbReference type="GO" id="GO:0005737">
    <property type="term" value="C:cytoplasm"/>
    <property type="evidence" value="ECO:0000314"/>
    <property type="project" value="UniProtKB"/>
</dbReference>
<dbReference type="GO" id="GO:0160232">
    <property type="term" value="C:INTAC complex"/>
    <property type="evidence" value="ECO:0000250"/>
    <property type="project" value="UniProtKB"/>
</dbReference>
<dbReference type="GO" id="GO:0032039">
    <property type="term" value="C:integrator complex"/>
    <property type="evidence" value="ECO:0007669"/>
    <property type="project" value="Ensembl"/>
</dbReference>
<dbReference type="GO" id="GO:0016604">
    <property type="term" value="C:nuclear body"/>
    <property type="evidence" value="ECO:0007669"/>
    <property type="project" value="Ensembl"/>
</dbReference>
<dbReference type="GO" id="GO:0005634">
    <property type="term" value="C:nucleus"/>
    <property type="evidence" value="ECO:0000314"/>
    <property type="project" value="UniProtKB"/>
</dbReference>
<dbReference type="GO" id="GO:0140297">
    <property type="term" value="F:DNA-binding transcription factor binding"/>
    <property type="evidence" value="ECO:0007669"/>
    <property type="project" value="Ensembl"/>
</dbReference>
<dbReference type="GO" id="GO:0051301">
    <property type="term" value="P:cell division"/>
    <property type="evidence" value="ECO:0007669"/>
    <property type="project" value="UniProtKB-KW"/>
</dbReference>
<dbReference type="GO" id="GO:0051642">
    <property type="term" value="P:centrosome localization"/>
    <property type="evidence" value="ECO:0000266"/>
    <property type="project" value="MGI"/>
</dbReference>
<dbReference type="GO" id="GO:0030317">
    <property type="term" value="P:flagellated sperm motility"/>
    <property type="evidence" value="ECO:0000250"/>
    <property type="project" value="UniProtKB"/>
</dbReference>
<dbReference type="GO" id="GO:0007052">
    <property type="term" value="P:mitotic spindle organization"/>
    <property type="evidence" value="ECO:0000266"/>
    <property type="project" value="MGI"/>
</dbReference>
<dbReference type="GO" id="GO:0090435">
    <property type="term" value="P:protein localization to nuclear envelope"/>
    <property type="evidence" value="ECO:0000266"/>
    <property type="project" value="MGI"/>
</dbReference>
<dbReference type="GO" id="GO:0080154">
    <property type="term" value="P:regulation of fertilization"/>
    <property type="evidence" value="ECO:0000250"/>
    <property type="project" value="UniProtKB"/>
</dbReference>
<dbReference type="GO" id="GO:0007346">
    <property type="term" value="P:regulation of mitotic cell cycle"/>
    <property type="evidence" value="ECO:0000250"/>
    <property type="project" value="UniProtKB"/>
</dbReference>
<dbReference type="GO" id="GO:0160240">
    <property type="term" value="P:RNA polymerase II transcription initiation surveillance"/>
    <property type="evidence" value="ECO:0000250"/>
    <property type="project" value="UniProtKB"/>
</dbReference>
<dbReference type="GO" id="GO:0016180">
    <property type="term" value="P:snRNA processing"/>
    <property type="evidence" value="ECO:0007669"/>
    <property type="project" value="Ensembl"/>
</dbReference>
<dbReference type="InterPro" id="IPR019355">
    <property type="entry name" value="Cell_cycle_regulator_Mat89Bb"/>
</dbReference>
<dbReference type="PANTHER" id="PTHR12955:SF1">
    <property type="entry name" value="INTEGRATOR COMPLEX SUBUNIT 13"/>
    <property type="match status" value="1"/>
</dbReference>
<dbReference type="PANTHER" id="PTHR12955">
    <property type="entry name" value="SARCOMA ANTIGEN NY-SAR-95-RELATED"/>
    <property type="match status" value="1"/>
</dbReference>
<dbReference type="Pfam" id="PF10221">
    <property type="entry name" value="Mat89Bb"/>
    <property type="match status" value="1"/>
</dbReference>
<organism>
    <name type="scientific">Mus musculus</name>
    <name type="common">Mouse</name>
    <dbReference type="NCBI Taxonomy" id="10090"/>
    <lineage>
        <taxon>Eukaryota</taxon>
        <taxon>Metazoa</taxon>
        <taxon>Chordata</taxon>
        <taxon>Craniata</taxon>
        <taxon>Vertebrata</taxon>
        <taxon>Euteleostomi</taxon>
        <taxon>Mammalia</taxon>
        <taxon>Eutheria</taxon>
        <taxon>Euarchontoglires</taxon>
        <taxon>Glires</taxon>
        <taxon>Rodentia</taxon>
        <taxon>Myomorpha</taxon>
        <taxon>Muroidea</taxon>
        <taxon>Muridae</taxon>
        <taxon>Murinae</taxon>
        <taxon>Mus</taxon>
        <taxon>Mus</taxon>
    </lineage>
</organism>
<evidence type="ECO:0000250" key="1">
    <source>
        <dbReference type="UniProtKB" id="Q9NVM9"/>
    </source>
</evidence>
<evidence type="ECO:0000256" key="2">
    <source>
        <dbReference type="SAM" id="MobiDB-lite"/>
    </source>
</evidence>
<evidence type="ECO:0000269" key="3">
    <source>
    </source>
</evidence>
<evidence type="ECO:0000269" key="4">
    <source>
    </source>
</evidence>
<evidence type="ECO:0000305" key="5"/>
<evidence type="ECO:0000312" key="6">
    <source>
        <dbReference type="MGI" id="MGI:1918427"/>
    </source>
</evidence>
<gene>
    <name evidence="6" type="primary">IntS13</name>
    <name type="synonym">Asun</name>
    <name type="synonym">Spata30</name>
</gene>
<proteinExistence type="evidence at protein level"/>
<name>INT13_MOUSE</name>
<sequence>MKIFSESHKTVFVVDHCPYMAESCRQHVEFDMLVKNRTQGIIPLAPISKSLWTCSVESSMEYCRIMYDIFPFKKLVNFIVSDSGAHVLNSWTQEDQNLQELMAALATVGPPNPRADPECCSILHGLVAAVETLCKITEYQHEARTLLMENAERVGNRGRIICITNAKSDSHVRMLEDCVQETIHEHNKLAANSDHLMQIQKCELVLIHTYPVGEDSLVSDRPKKELSPVLTSEVHSVRAGRHLATKLNVLVQQHFDLASTTITNIPMKEEQHANTSANYDVELLHHKDAHVDFLRSGDSHSGSSSREGPFKETVTLKWCTPRTNSIELHYCTGAYRISPVDVNSRPSSCLTNFLLNGRSVLLEQPRKSGSKVISHMLSSHGGEIFLHVLSSSRSILEDPPSISEGCGGRVTDYRITDFGEFMRENRLTPFLDPRYKIDASLEIPLERAKDQLEKHTRYWPMIISQTTIFNMQAVVPLAGVIVKESLTEEDVLNCQKTIYNLVDMERKNDPLPVSTVGTRGKGPKRDEQYRIMWNELETLVRAHISNSEKHQRVLECLMACRSKPPEEEERKKRGRKREDREDKSEQAGKEHGTEKARPDADRLKGILERGKEELAEAEVIKDSPDSPEPPNKKPLVETDETPHMEKSKGPVSLLSLWSNRINTANSRKHQEFAGRLNSVNNRAELYQHLKEENGEEVGLTGGPRTAIPFLKCPRSPVVNRMETTENGKASRQ</sequence>
<comment type="function">
    <text evidence="1">Component of the integrator complex, a multiprotein complex that terminates RNA polymerase II (Pol II) transcription in the promoter-proximal region of genes. The integrator complex provides a quality checkpoint during transcription elongation by driving premature transcription termination of transcripts that are unfavorably configured for transcriptional elongation: the complex terminates transcription by (1) catalyzing dephosphorylation of the C-terminal domain (CTD) of Pol II subunit POLR2A/RPB1 and SUPT5H/SPT5, (2) degrading the exiting nascent RNA transcript via endonuclease activity and (3) promoting the release of Pol II from bound DNA. The integrator complex is also involved in terminating the synthesis of non-coding Pol II transcripts, such as enhancer RNAs (eRNAs), small nuclear RNAs (snRNAs), telomerase RNAs and long non-coding RNAs (lncRNAs). Within the integrator complex, INTS13 is part of the integrator tail module and acts as a platform for the recruitment of transcription factors at promoters. At prophase, mediates recruitment of cytoplasmic dynein to the nuclear envelope, a step important for proper centrosome-nucleus coupling. At G2/M phase, may be required for proper spindle formation and execution of cytokinesis.</text>
</comment>
<comment type="subunit">
    <text evidence="1 3">Component of the Integrator complex, composed of core subunits INTS1, INTS2, INTS3, INTS4, INTS5, INTS6, INTS7, INTS8, INTS9/RC74, INTS10, INTS11/CPSF3L, INTS12, INTS13, INTS14 and INTS15. The core complex associates with protein phosphatase 2A subunits PPP2CA and PPP2R1A, to form the Integrator-PP2A (INTAC) complex. INTS13 is part of the tail subcomplex, composed of INTS10, INTS13, INTS14 and INTS15. Interacts with transcription factors ZNF609 and ZNF655 (By similarity). Interacts with PAFAH1B1; this interaction may be required for proper recruitment of dynein complexes to the nuclear envelope at prophase (PubMed:23097494).</text>
</comment>
<comment type="subcellular location">
    <subcellularLocation>
        <location evidence="4">Nucleus</location>
    </subcellularLocation>
    <subcellularLocation>
        <location evidence="3 4">Cytoplasm</location>
    </subcellularLocation>
    <text evidence="1">Nuclear location is required for recruitment of dynein motors to nuclear envelope at G2/M.</text>
</comment>
<comment type="domain">
    <text evidence="1">The cleavage module binding motif (CMBM) mediates recruitment of transcription factors.</text>
</comment>
<comment type="similarity">
    <text evidence="5">Belongs to the Integrator subunit 13 family.</text>
</comment>
<accession>Q8QZV7</accession>
<accession>E9QLV7</accession>
<accession>Q99JT8</accession>
<keyword id="KW-0131">Cell cycle</keyword>
<keyword id="KW-0132">Cell division</keyword>
<keyword id="KW-0963">Cytoplasm</keyword>
<keyword id="KW-1017">Isopeptide bond</keyword>
<keyword id="KW-0498">Mitosis</keyword>
<keyword id="KW-0539">Nucleus</keyword>
<keyword id="KW-0597">Phosphoprotein</keyword>
<keyword id="KW-1185">Reference proteome</keyword>
<keyword id="KW-0832">Ubl conjugation</keyword>